<dbReference type="EC" id="2.1.1.242" evidence="1"/>
<dbReference type="EMBL" id="AE016825">
    <property type="protein sequence ID" value="AAQ58141.1"/>
    <property type="molecule type" value="Genomic_DNA"/>
</dbReference>
<dbReference type="RefSeq" id="WP_011134018.1">
    <property type="nucleotide sequence ID" value="NC_005085.1"/>
</dbReference>
<dbReference type="SMR" id="Q7P0V2"/>
<dbReference type="STRING" id="243365.CV_0463"/>
<dbReference type="KEGG" id="cvi:CV_0463"/>
<dbReference type="eggNOG" id="COG2265">
    <property type="taxonomic scope" value="Bacteria"/>
</dbReference>
<dbReference type="HOGENOM" id="CLU_076324_0_1_4"/>
<dbReference type="OrthoDB" id="3191794at2"/>
<dbReference type="Proteomes" id="UP000001424">
    <property type="component" value="Chromosome"/>
</dbReference>
<dbReference type="GO" id="GO:0005737">
    <property type="term" value="C:cytoplasm"/>
    <property type="evidence" value="ECO:0007669"/>
    <property type="project" value="UniProtKB-SubCell"/>
</dbReference>
<dbReference type="GO" id="GO:0008990">
    <property type="term" value="F:rRNA (guanine-N2-)-methyltransferase activity"/>
    <property type="evidence" value="ECO:0007669"/>
    <property type="project" value="UniProtKB-UniRule"/>
</dbReference>
<dbReference type="CDD" id="cd02440">
    <property type="entry name" value="AdoMet_MTases"/>
    <property type="match status" value="1"/>
</dbReference>
<dbReference type="Gene3D" id="3.40.50.150">
    <property type="entry name" value="Vaccinia Virus protein VP39"/>
    <property type="match status" value="1"/>
</dbReference>
<dbReference type="HAMAP" id="MF_01523">
    <property type="entry name" value="16SrRNA_methyltr_J"/>
    <property type="match status" value="1"/>
</dbReference>
<dbReference type="InterPro" id="IPR007536">
    <property type="entry name" value="16SrRNA_methylTrfase_J"/>
</dbReference>
<dbReference type="InterPro" id="IPR029063">
    <property type="entry name" value="SAM-dependent_MTases_sf"/>
</dbReference>
<dbReference type="PANTHER" id="PTHR36112">
    <property type="entry name" value="RIBOSOMAL RNA SMALL SUBUNIT METHYLTRANSFERASE J"/>
    <property type="match status" value="1"/>
</dbReference>
<dbReference type="PANTHER" id="PTHR36112:SF1">
    <property type="entry name" value="RIBOSOMAL RNA SMALL SUBUNIT METHYLTRANSFERASE J"/>
    <property type="match status" value="1"/>
</dbReference>
<dbReference type="Pfam" id="PF04445">
    <property type="entry name" value="SAM_MT"/>
    <property type="match status" value="1"/>
</dbReference>
<dbReference type="SUPFAM" id="SSF53335">
    <property type="entry name" value="S-adenosyl-L-methionine-dependent methyltransferases"/>
    <property type="match status" value="1"/>
</dbReference>
<accession>Q7P0V2</accession>
<gene>
    <name evidence="1" type="primary">rsmJ</name>
    <name type="ordered locus">CV_0463</name>
</gene>
<keyword id="KW-0963">Cytoplasm</keyword>
<keyword id="KW-0489">Methyltransferase</keyword>
<keyword id="KW-1185">Reference proteome</keyword>
<keyword id="KW-0698">rRNA processing</keyword>
<keyword id="KW-0949">S-adenosyl-L-methionine</keyword>
<keyword id="KW-0808">Transferase</keyword>
<name>RSMJ_CHRVO</name>
<reference key="1">
    <citation type="journal article" date="2003" name="Proc. Natl. Acad. Sci. U.S.A.">
        <title>The complete genome sequence of Chromobacterium violaceum reveals remarkable and exploitable bacterial adaptability.</title>
        <authorList>
            <person name="Vasconcelos A.T.R."/>
            <person name="de Almeida D.F."/>
            <person name="Hungria M."/>
            <person name="Guimaraes C.T."/>
            <person name="Antonio R.V."/>
            <person name="Almeida F.C."/>
            <person name="de Almeida L.G.P."/>
            <person name="de Almeida R."/>
            <person name="Alves-Gomes J.A."/>
            <person name="Andrade E.M."/>
            <person name="Araripe J."/>
            <person name="de Araujo M.F.F."/>
            <person name="Astolfi-Filho S."/>
            <person name="Azevedo V."/>
            <person name="Baptista A.J."/>
            <person name="Bataus L.A.M."/>
            <person name="Batista J.S."/>
            <person name="Belo A."/>
            <person name="van den Berg C."/>
            <person name="Bogo M."/>
            <person name="Bonatto S."/>
            <person name="Bordignon J."/>
            <person name="Brigido M.M."/>
            <person name="Brito C.A."/>
            <person name="Brocchi M."/>
            <person name="Burity H.A."/>
            <person name="Camargo A.A."/>
            <person name="Cardoso D.D.P."/>
            <person name="Carneiro N.P."/>
            <person name="Carraro D.M."/>
            <person name="Carvalho C.M.B."/>
            <person name="Cascardo J.C.M."/>
            <person name="Cavada B.S."/>
            <person name="Chueire L.M.O."/>
            <person name="Creczynski-Pasa T.B."/>
            <person name="Cunha-Junior N.C."/>
            <person name="Fagundes N."/>
            <person name="Falcao C.L."/>
            <person name="Fantinatti F."/>
            <person name="Farias I.P."/>
            <person name="Felipe M.S.S."/>
            <person name="Ferrari L.P."/>
            <person name="Ferro J.A."/>
            <person name="Ferro M.I.T."/>
            <person name="Franco G.R."/>
            <person name="Freitas N.S.A."/>
            <person name="Furlan L.R."/>
            <person name="Gazzinelli R.T."/>
            <person name="Gomes E.A."/>
            <person name="Goncalves P.R."/>
            <person name="Grangeiro T.B."/>
            <person name="Grattapaglia D."/>
            <person name="Grisard E.C."/>
            <person name="Hanna E.S."/>
            <person name="Jardim S.N."/>
            <person name="Laurino J."/>
            <person name="Leoi L.C.T."/>
            <person name="Lima L.F.A."/>
            <person name="Loureiro M.F."/>
            <person name="Lyra M.C.C.P."/>
            <person name="Madeira H.M.F."/>
            <person name="Manfio G.P."/>
            <person name="Maranhao A.Q."/>
            <person name="Martins W.S."/>
            <person name="di Mauro S.M.Z."/>
            <person name="de Medeiros S.R.B."/>
            <person name="Meissner R.V."/>
            <person name="Moreira M.A.M."/>
            <person name="Nascimento F.F."/>
            <person name="Nicolas M.F."/>
            <person name="Oliveira J.G."/>
            <person name="Oliveira S.C."/>
            <person name="Paixao R.F.C."/>
            <person name="Parente J.A."/>
            <person name="Pedrosa F.O."/>
            <person name="Pena S.D.J."/>
            <person name="Pereira J.O."/>
            <person name="Pereira M."/>
            <person name="Pinto L.S.R.C."/>
            <person name="Pinto L.S."/>
            <person name="Porto J.I.R."/>
            <person name="Potrich D.P."/>
            <person name="Ramalho-Neto C.E."/>
            <person name="Reis A.M.M."/>
            <person name="Rigo L.U."/>
            <person name="Rondinelli E."/>
            <person name="Santos E.B.P."/>
            <person name="Santos F.R."/>
            <person name="Schneider M.P.C."/>
            <person name="Seuanez H.N."/>
            <person name="Silva A.M.R."/>
            <person name="da Silva A.L.C."/>
            <person name="Silva D.W."/>
            <person name="Silva R."/>
            <person name="Simoes I.C."/>
            <person name="Simon D."/>
            <person name="Soares C.M.A."/>
            <person name="Soares R.B.A."/>
            <person name="Souza E.M."/>
            <person name="Souza K.R.L."/>
            <person name="Souza R.C."/>
            <person name="Steffens M.B.R."/>
            <person name="Steindel M."/>
            <person name="Teixeira S.R."/>
            <person name="Urmenyi T."/>
            <person name="Vettore A."/>
            <person name="Wassem R."/>
            <person name="Zaha A."/>
            <person name="Simpson A.J.G."/>
        </authorList>
    </citation>
    <scope>NUCLEOTIDE SEQUENCE [LARGE SCALE GENOMIC DNA]</scope>
    <source>
        <strain>ATCC 12472 / DSM 30191 / JCM 1249 / CCUG 213 / NBRC 12614 / NCIMB 9131 / NCTC 9757 / MK</strain>
    </source>
</reference>
<evidence type="ECO:0000255" key="1">
    <source>
        <dbReference type="HAMAP-Rule" id="MF_01523"/>
    </source>
</evidence>
<comment type="function">
    <text evidence="1">Specifically methylates the guanosine in position 1516 of 16S rRNA.</text>
</comment>
<comment type="catalytic activity">
    <reaction evidence="1">
        <text>guanosine(1516) in 16S rRNA + S-adenosyl-L-methionine = N(2)-methylguanosine(1516) in 16S rRNA + S-adenosyl-L-homocysteine + H(+)</text>
        <dbReference type="Rhea" id="RHEA:43220"/>
        <dbReference type="Rhea" id="RHEA-COMP:10412"/>
        <dbReference type="Rhea" id="RHEA-COMP:10413"/>
        <dbReference type="ChEBI" id="CHEBI:15378"/>
        <dbReference type="ChEBI" id="CHEBI:57856"/>
        <dbReference type="ChEBI" id="CHEBI:59789"/>
        <dbReference type="ChEBI" id="CHEBI:74269"/>
        <dbReference type="ChEBI" id="CHEBI:74481"/>
        <dbReference type="EC" id="2.1.1.242"/>
    </reaction>
</comment>
<comment type="subcellular location">
    <subcellularLocation>
        <location evidence="1">Cytoplasm</location>
    </subcellularLocation>
</comment>
<comment type="similarity">
    <text evidence="1">Belongs to the methyltransferase superfamily. RsmJ family.</text>
</comment>
<proteinExistence type="inferred from homology"/>
<sequence length="258" mass="27673">MTATPLYCAEPARLDTARRLCERFSLPLIKQRPADGYWLELGSERLELLTTGKHGAVYAEFVEGAARHRREQGGGRGQPVAKAVGLKGAKDLPHVADATAGLGRDSFVLATLGCRVTMVERSPVAAALLADALERAQRDETTRDIAARMTLVHANSRNWLAGLTEAQRPDVVFVDPMFPDTDKKSAAAKKDMQAFQQVIGDDMDSAELLAAAIAAARVRVVVKRPRLGAAIAGVKPSAVLDGKSTRFDLYVIKALASG</sequence>
<organism>
    <name type="scientific">Chromobacterium violaceum (strain ATCC 12472 / DSM 30191 / JCM 1249 / CCUG 213 / NBRC 12614 / NCIMB 9131 / NCTC 9757 / MK)</name>
    <dbReference type="NCBI Taxonomy" id="243365"/>
    <lineage>
        <taxon>Bacteria</taxon>
        <taxon>Pseudomonadati</taxon>
        <taxon>Pseudomonadota</taxon>
        <taxon>Betaproteobacteria</taxon>
        <taxon>Neisseriales</taxon>
        <taxon>Chromobacteriaceae</taxon>
        <taxon>Chromobacterium</taxon>
    </lineage>
</organism>
<feature type="chain" id="PRO_0000212061" description="Ribosomal RNA small subunit methyltransferase J">
    <location>
        <begin position="1"/>
        <end position="258"/>
    </location>
</feature>
<feature type="binding site" evidence="1">
    <location>
        <begin position="104"/>
        <end position="105"/>
    </location>
    <ligand>
        <name>S-adenosyl-L-methionine</name>
        <dbReference type="ChEBI" id="CHEBI:59789"/>
    </ligand>
</feature>
<feature type="binding site" evidence="1">
    <location>
        <begin position="120"/>
        <end position="121"/>
    </location>
    <ligand>
        <name>S-adenosyl-L-methionine</name>
        <dbReference type="ChEBI" id="CHEBI:59789"/>
    </ligand>
</feature>
<feature type="binding site" evidence="1">
    <location>
        <position position="175"/>
    </location>
    <ligand>
        <name>S-adenosyl-L-methionine</name>
        <dbReference type="ChEBI" id="CHEBI:59789"/>
    </ligand>
</feature>
<protein>
    <recommendedName>
        <fullName evidence="1">Ribosomal RNA small subunit methyltransferase J</fullName>
        <ecNumber evidence="1">2.1.1.242</ecNumber>
    </recommendedName>
    <alternativeName>
        <fullName evidence="1">16S rRNA m2G1516 methyltransferase</fullName>
    </alternativeName>
    <alternativeName>
        <fullName evidence="1">rRNA (guanine-N(2)-)-methyltransferase</fullName>
    </alternativeName>
</protein>